<gene>
    <name evidence="1" type="primary">rsmH</name>
    <name type="synonym">mraW</name>
    <name type="ordered locus">RPC_2186</name>
</gene>
<keyword id="KW-0963">Cytoplasm</keyword>
<keyword id="KW-0489">Methyltransferase</keyword>
<keyword id="KW-0698">rRNA processing</keyword>
<keyword id="KW-0949">S-adenosyl-L-methionine</keyword>
<keyword id="KW-0808">Transferase</keyword>
<organism>
    <name type="scientific">Rhodopseudomonas palustris (strain BisB18)</name>
    <dbReference type="NCBI Taxonomy" id="316056"/>
    <lineage>
        <taxon>Bacteria</taxon>
        <taxon>Pseudomonadati</taxon>
        <taxon>Pseudomonadota</taxon>
        <taxon>Alphaproteobacteria</taxon>
        <taxon>Hyphomicrobiales</taxon>
        <taxon>Nitrobacteraceae</taxon>
        <taxon>Rhodopseudomonas</taxon>
    </lineage>
</organism>
<protein>
    <recommendedName>
        <fullName evidence="1">Ribosomal RNA small subunit methyltransferase H</fullName>
        <ecNumber evidence="1">2.1.1.199</ecNumber>
    </recommendedName>
    <alternativeName>
        <fullName evidence="1">16S rRNA m(4)C1402 methyltransferase</fullName>
    </alternativeName>
    <alternativeName>
        <fullName evidence="1">rRNA (cytosine-N(4)-)-methyltransferase RsmH</fullName>
    </alternativeName>
</protein>
<reference key="1">
    <citation type="submission" date="2006-03" db="EMBL/GenBank/DDBJ databases">
        <title>Complete sequence of Rhodopseudomonas palustris BisB18.</title>
        <authorList>
            <consortium name="US DOE Joint Genome Institute"/>
            <person name="Copeland A."/>
            <person name="Lucas S."/>
            <person name="Lapidus A."/>
            <person name="Barry K."/>
            <person name="Detter J.C."/>
            <person name="Glavina del Rio T."/>
            <person name="Hammon N."/>
            <person name="Israni S."/>
            <person name="Dalin E."/>
            <person name="Tice H."/>
            <person name="Pitluck S."/>
            <person name="Chain P."/>
            <person name="Malfatti S."/>
            <person name="Shin M."/>
            <person name="Vergez L."/>
            <person name="Schmutz J."/>
            <person name="Larimer F."/>
            <person name="Land M."/>
            <person name="Hauser L."/>
            <person name="Pelletier D.A."/>
            <person name="Kyrpides N."/>
            <person name="Anderson I."/>
            <person name="Oda Y."/>
            <person name="Harwood C.S."/>
            <person name="Richardson P."/>
        </authorList>
    </citation>
    <scope>NUCLEOTIDE SEQUENCE [LARGE SCALE GENOMIC DNA]</scope>
    <source>
        <strain>BisB18</strain>
    </source>
</reference>
<sequence>MTEPSRHIPVLGQEAVGLLAPRDGGVYVDATFGAGGYSGLILAAADTRVIGIDRDRTAIAGGFDLVERSGGRLTLVEDRFSNLAEVCAAQGAGLVDGVVMDVGVSSMQLDQSERGFSFRLAGPLDMRMGQSGPSAADVIAVASEAELANIIYIFGEERHSRAVARAIVAARAIEPITTTRALADIVGKVVHAKPGEIHPATRTFQGLRIFVNGELDELHLALSAAERVLKPGGRLVVVSFHSLEDRIVKNFFNARGKTGGGSRHLPELDQEAPSFAILTKRPITAGPDELAGNPRARSAKLRAGERTAALAHPGEDLPAWPTLDAVMGRR</sequence>
<proteinExistence type="inferred from homology"/>
<evidence type="ECO:0000255" key="1">
    <source>
        <dbReference type="HAMAP-Rule" id="MF_01007"/>
    </source>
</evidence>
<dbReference type="EC" id="2.1.1.199" evidence="1"/>
<dbReference type="EMBL" id="CP000301">
    <property type="protein sequence ID" value="ABD87740.1"/>
    <property type="molecule type" value="Genomic_DNA"/>
</dbReference>
<dbReference type="SMR" id="Q216E6"/>
<dbReference type="STRING" id="316056.RPC_2186"/>
<dbReference type="KEGG" id="rpc:RPC_2186"/>
<dbReference type="eggNOG" id="COG0275">
    <property type="taxonomic scope" value="Bacteria"/>
</dbReference>
<dbReference type="HOGENOM" id="CLU_038422_1_1_5"/>
<dbReference type="OrthoDB" id="9806637at2"/>
<dbReference type="GO" id="GO:0005737">
    <property type="term" value="C:cytoplasm"/>
    <property type="evidence" value="ECO:0007669"/>
    <property type="project" value="UniProtKB-SubCell"/>
</dbReference>
<dbReference type="GO" id="GO:0071424">
    <property type="term" value="F:rRNA (cytosine-N4-)-methyltransferase activity"/>
    <property type="evidence" value="ECO:0007669"/>
    <property type="project" value="UniProtKB-UniRule"/>
</dbReference>
<dbReference type="GO" id="GO:0070475">
    <property type="term" value="P:rRNA base methylation"/>
    <property type="evidence" value="ECO:0007669"/>
    <property type="project" value="UniProtKB-UniRule"/>
</dbReference>
<dbReference type="Gene3D" id="1.10.150.170">
    <property type="entry name" value="Putative methyltransferase TM0872, insert domain"/>
    <property type="match status" value="1"/>
</dbReference>
<dbReference type="Gene3D" id="3.40.50.150">
    <property type="entry name" value="Vaccinia Virus protein VP39"/>
    <property type="match status" value="1"/>
</dbReference>
<dbReference type="HAMAP" id="MF_01007">
    <property type="entry name" value="16SrRNA_methyltr_H"/>
    <property type="match status" value="1"/>
</dbReference>
<dbReference type="InterPro" id="IPR002903">
    <property type="entry name" value="RsmH"/>
</dbReference>
<dbReference type="InterPro" id="IPR023397">
    <property type="entry name" value="SAM-dep_MeTrfase_MraW_recog"/>
</dbReference>
<dbReference type="InterPro" id="IPR029063">
    <property type="entry name" value="SAM-dependent_MTases_sf"/>
</dbReference>
<dbReference type="NCBIfam" id="TIGR00006">
    <property type="entry name" value="16S rRNA (cytosine(1402)-N(4))-methyltransferase RsmH"/>
    <property type="match status" value="1"/>
</dbReference>
<dbReference type="PANTHER" id="PTHR11265:SF0">
    <property type="entry name" value="12S RRNA N4-METHYLCYTIDINE METHYLTRANSFERASE"/>
    <property type="match status" value="1"/>
</dbReference>
<dbReference type="PANTHER" id="PTHR11265">
    <property type="entry name" value="S-ADENOSYL-METHYLTRANSFERASE MRAW"/>
    <property type="match status" value="1"/>
</dbReference>
<dbReference type="Pfam" id="PF01795">
    <property type="entry name" value="Methyltransf_5"/>
    <property type="match status" value="1"/>
</dbReference>
<dbReference type="PIRSF" id="PIRSF004486">
    <property type="entry name" value="MraW"/>
    <property type="match status" value="1"/>
</dbReference>
<dbReference type="SUPFAM" id="SSF81799">
    <property type="entry name" value="Putative methyltransferase TM0872, insert domain"/>
    <property type="match status" value="1"/>
</dbReference>
<dbReference type="SUPFAM" id="SSF53335">
    <property type="entry name" value="S-adenosyl-L-methionine-dependent methyltransferases"/>
    <property type="match status" value="1"/>
</dbReference>
<name>RSMH_RHOPB</name>
<accession>Q216E6</accession>
<comment type="function">
    <text evidence="1">Specifically methylates the N4 position of cytidine in position 1402 (C1402) of 16S rRNA.</text>
</comment>
<comment type="catalytic activity">
    <reaction evidence="1">
        <text>cytidine(1402) in 16S rRNA + S-adenosyl-L-methionine = N(4)-methylcytidine(1402) in 16S rRNA + S-adenosyl-L-homocysteine + H(+)</text>
        <dbReference type="Rhea" id="RHEA:42928"/>
        <dbReference type="Rhea" id="RHEA-COMP:10286"/>
        <dbReference type="Rhea" id="RHEA-COMP:10287"/>
        <dbReference type="ChEBI" id="CHEBI:15378"/>
        <dbReference type="ChEBI" id="CHEBI:57856"/>
        <dbReference type="ChEBI" id="CHEBI:59789"/>
        <dbReference type="ChEBI" id="CHEBI:74506"/>
        <dbReference type="ChEBI" id="CHEBI:82748"/>
        <dbReference type="EC" id="2.1.1.199"/>
    </reaction>
</comment>
<comment type="subcellular location">
    <subcellularLocation>
        <location evidence="1">Cytoplasm</location>
    </subcellularLocation>
</comment>
<comment type="similarity">
    <text evidence="1">Belongs to the methyltransferase superfamily. RsmH family.</text>
</comment>
<feature type="chain" id="PRO_0000387081" description="Ribosomal RNA small subunit methyltransferase H">
    <location>
        <begin position="1"/>
        <end position="330"/>
    </location>
</feature>
<feature type="binding site" evidence="1">
    <location>
        <begin position="35"/>
        <end position="37"/>
    </location>
    <ligand>
        <name>S-adenosyl-L-methionine</name>
        <dbReference type="ChEBI" id="CHEBI:59789"/>
    </ligand>
</feature>
<feature type="binding site" evidence="1">
    <location>
        <position position="53"/>
    </location>
    <ligand>
        <name>S-adenosyl-L-methionine</name>
        <dbReference type="ChEBI" id="CHEBI:59789"/>
    </ligand>
</feature>
<feature type="binding site" evidence="1">
    <location>
        <position position="80"/>
    </location>
    <ligand>
        <name>S-adenosyl-L-methionine</name>
        <dbReference type="ChEBI" id="CHEBI:59789"/>
    </ligand>
</feature>
<feature type="binding site" evidence="1">
    <location>
        <position position="101"/>
    </location>
    <ligand>
        <name>S-adenosyl-L-methionine</name>
        <dbReference type="ChEBI" id="CHEBI:59789"/>
    </ligand>
</feature>
<feature type="binding site" evidence="1">
    <location>
        <position position="108"/>
    </location>
    <ligand>
        <name>S-adenosyl-L-methionine</name>
        <dbReference type="ChEBI" id="CHEBI:59789"/>
    </ligand>
</feature>